<reference key="1">
    <citation type="journal article" date="1988" name="Nucleic Acids Res.">
        <title>Nucleotide sequence of the triosephosphate isomerase gene from Macaca mulatta.</title>
        <authorList>
            <person name="Old S.E."/>
            <person name="Mohrenweiser H.W."/>
        </authorList>
    </citation>
    <scope>NUCLEOTIDE SEQUENCE [GENOMIC DNA]</scope>
</reference>
<organism>
    <name type="scientific">Macaca mulatta</name>
    <name type="common">Rhesus macaque</name>
    <dbReference type="NCBI Taxonomy" id="9544"/>
    <lineage>
        <taxon>Eukaryota</taxon>
        <taxon>Metazoa</taxon>
        <taxon>Chordata</taxon>
        <taxon>Craniata</taxon>
        <taxon>Vertebrata</taxon>
        <taxon>Euteleostomi</taxon>
        <taxon>Mammalia</taxon>
        <taxon>Eutheria</taxon>
        <taxon>Euarchontoglires</taxon>
        <taxon>Primates</taxon>
        <taxon>Haplorrhini</taxon>
        <taxon>Catarrhini</taxon>
        <taxon>Cercopithecidae</taxon>
        <taxon>Cercopithecinae</taxon>
        <taxon>Macaca</taxon>
    </lineage>
</organism>
<feature type="initiator methionine" description="Removed" evidence="4">
    <location>
        <position position="1"/>
    </location>
</feature>
<feature type="chain" id="PRO_0000090115" description="Triosephosphate isomerase">
    <location>
        <begin position="2"/>
        <end position="249"/>
    </location>
</feature>
<feature type="active site" description="Electrophile" evidence="5">
    <location>
        <position position="96"/>
    </location>
</feature>
<feature type="active site" description="Proton acceptor" evidence="5">
    <location>
        <position position="166"/>
    </location>
</feature>
<feature type="binding site" evidence="5">
    <location>
        <position position="12"/>
    </location>
    <ligand>
        <name>substrate</name>
    </ligand>
</feature>
<feature type="binding site" evidence="5">
    <location>
        <position position="14"/>
    </location>
    <ligand>
        <name>substrate</name>
    </ligand>
</feature>
<feature type="modified residue" description="N6-acetyllysine" evidence="4">
    <location>
        <position position="14"/>
    </location>
</feature>
<feature type="modified residue" description="3'-nitrotyrosine" evidence="2">
    <location>
        <position position="68"/>
    </location>
</feature>
<feature type="modified residue" description="Phosphoserine" evidence="4">
    <location>
        <position position="80"/>
    </location>
</feature>
<feature type="modified residue" description="Phosphoserine" evidence="3">
    <location>
        <position position="106"/>
    </location>
</feature>
<feature type="modified residue" description="N6-succinyllysine" evidence="2">
    <location>
        <position position="149"/>
    </location>
</feature>
<feature type="modified residue" description="N6-acetyllysine; alternate" evidence="2">
    <location>
        <position position="156"/>
    </location>
</feature>
<feature type="modified residue" description="N6-succinyllysine; alternate" evidence="2">
    <location>
        <position position="156"/>
    </location>
</feature>
<feature type="modified residue" description="Phosphoserine" evidence="2">
    <location>
        <position position="159"/>
    </location>
</feature>
<feature type="modified residue" description="Phosphothreonine" evidence="2">
    <location>
        <position position="173"/>
    </location>
</feature>
<feature type="modified residue" description="N6-acetyllysine; alternate" evidence="4">
    <location>
        <position position="194"/>
    </location>
</feature>
<feature type="modified residue" description="N6-methyllysine; alternate" evidence="4">
    <location>
        <position position="194"/>
    </location>
</feature>
<feature type="modified residue" description="N6-succinyllysine; alternate" evidence="2">
    <location>
        <position position="194"/>
    </location>
</feature>
<feature type="modified residue" description="Phosphoserine" evidence="3">
    <location>
        <position position="198"/>
    </location>
</feature>
<feature type="modified residue" description="3'-nitrotyrosine" evidence="2">
    <location>
        <position position="209"/>
    </location>
</feature>
<feature type="modified residue" description="Phosphoserine" evidence="4">
    <location>
        <position position="212"/>
    </location>
</feature>
<feature type="modified residue" description="Phosphothreonine" evidence="4">
    <location>
        <position position="214"/>
    </location>
</feature>
<feature type="modified residue" description="Phosphoserine" evidence="4">
    <location>
        <position position="223"/>
    </location>
</feature>
<feature type="modified residue" description="N6-acetyllysine" evidence="4">
    <location>
        <position position="238"/>
    </location>
</feature>
<feature type="cross-link" description="Glycyl lysine isopeptide (Lys-Gly) (interchain with G-Cter in SUMO1)" evidence="4">
    <location>
        <position position="142"/>
    </location>
</feature>
<keyword id="KW-0007">Acetylation</keyword>
<keyword id="KW-0963">Cytoplasm</keyword>
<keyword id="KW-0312">Gluconeogenesis</keyword>
<keyword id="KW-0324">Glycolysis</keyword>
<keyword id="KW-0413">Isomerase</keyword>
<keyword id="KW-1017">Isopeptide bond</keyword>
<keyword id="KW-0456">Lyase</keyword>
<keyword id="KW-0488">Methylation</keyword>
<keyword id="KW-0944">Nitration</keyword>
<keyword id="KW-0597">Phosphoprotein</keyword>
<keyword id="KW-1185">Reference proteome</keyword>
<keyword id="KW-0832">Ubl conjugation</keyword>
<sequence length="249" mass="26711">MAPSRKFFVGGNWKMNGRKQNLGELIGTLNAAKVPADTEVVCAPPTAYIDFARQKLDPKIAVAAQNCYKVTNGAFTGEISPGMIKDCGATWVVLGHSERRHVFGESDELIGQKVAHALAEGLGVIACIGEKLDEREAGITEKVVFEQTKVIADNVKDWSKVVLAYEPVWAIGTGKTATPQQAQEVHEKLRGWLKSNVSEAVAQSTRIIYGGSVTGATCKELASQPDVDGFLVGGASLKPEFVDIINAKQ</sequence>
<name>TPIS_MACMU</name>
<comment type="function">
    <text evidence="1">Triosephosphate isomerase is an extremely efficient metabolic enzyme that catalyzes the interconversion between dihydroxyacetone phosphate (DHAP) and D-glyceraldehyde-3-phosphate (G3P) in glycolysis and gluconeogenesis.</text>
</comment>
<comment type="function">
    <text evidence="1">It is also responsible for the non-negligible production of methylglyoxal a reactive cytotoxic side-product that modifies and can alter proteins, DNA and lipids.</text>
</comment>
<comment type="catalytic activity">
    <reaction evidence="1">
        <text>dihydroxyacetone phosphate = methylglyoxal + phosphate</text>
        <dbReference type="Rhea" id="RHEA:17937"/>
        <dbReference type="ChEBI" id="CHEBI:17158"/>
        <dbReference type="ChEBI" id="CHEBI:43474"/>
        <dbReference type="ChEBI" id="CHEBI:57642"/>
        <dbReference type="EC" id="4.2.3.3"/>
    </reaction>
</comment>
<comment type="catalytic activity">
    <reaction evidence="5">
        <text>D-glyceraldehyde 3-phosphate = dihydroxyacetone phosphate</text>
        <dbReference type="Rhea" id="RHEA:18585"/>
        <dbReference type="ChEBI" id="CHEBI:57642"/>
        <dbReference type="ChEBI" id="CHEBI:59776"/>
        <dbReference type="EC" id="5.3.1.1"/>
    </reaction>
</comment>
<comment type="pathway">
    <text evidence="5">Carbohydrate degradation; glycolysis; D-glyceraldehyde 3-phosphate from glycerone phosphate: step 1/1.</text>
</comment>
<comment type="pathway">
    <text evidence="5">Carbohydrate biosynthesis; gluconeogenesis.</text>
</comment>
<comment type="subunit">
    <text evidence="5">Homodimer.</text>
</comment>
<comment type="subcellular location">
    <subcellularLocation>
        <location evidence="5">Cytoplasm</location>
    </subcellularLocation>
</comment>
<comment type="similarity">
    <text evidence="6">Belongs to the triosephosphate isomerase family.</text>
</comment>
<gene>
    <name type="primary">TPI1</name>
</gene>
<dbReference type="EC" id="5.3.1.1" evidence="5"/>
<dbReference type="EC" id="4.2.3.3" evidence="1"/>
<dbReference type="EMBL" id="M37572">
    <property type="protein sequence ID" value="AAA36922.1"/>
    <property type="molecule type" value="Genomic_DNA"/>
</dbReference>
<dbReference type="EMBL" id="M37561">
    <property type="protein sequence ID" value="AAA36922.1"/>
    <property type="status" value="JOINED"/>
    <property type="molecule type" value="Genomic_DNA"/>
</dbReference>
<dbReference type="EMBL" id="M37562">
    <property type="protein sequence ID" value="AAA36922.1"/>
    <property type="status" value="JOINED"/>
    <property type="molecule type" value="Genomic_DNA"/>
</dbReference>
<dbReference type="EMBL" id="M37563">
    <property type="protein sequence ID" value="AAA36922.1"/>
    <property type="status" value="JOINED"/>
    <property type="molecule type" value="Genomic_DNA"/>
</dbReference>
<dbReference type="EMBL" id="M37564">
    <property type="protein sequence ID" value="AAA36922.1"/>
    <property type="status" value="JOINED"/>
    <property type="molecule type" value="Genomic_DNA"/>
</dbReference>
<dbReference type="EMBL" id="M37570">
    <property type="protein sequence ID" value="AAA36922.1"/>
    <property type="status" value="JOINED"/>
    <property type="molecule type" value="Genomic_DNA"/>
</dbReference>
<dbReference type="EMBL" id="M37571">
    <property type="protein sequence ID" value="AAA36922.1"/>
    <property type="status" value="JOINED"/>
    <property type="molecule type" value="Genomic_DNA"/>
</dbReference>
<dbReference type="PIR" id="S01378">
    <property type="entry name" value="ISMQTR"/>
</dbReference>
<dbReference type="SMR" id="P15426"/>
<dbReference type="FunCoup" id="P15426">
    <property type="interactions" value="1351"/>
</dbReference>
<dbReference type="STRING" id="9544.ENSMMUP00000066527"/>
<dbReference type="PaxDb" id="9544-ENSMMUP00000041371"/>
<dbReference type="eggNOG" id="KOG1643">
    <property type="taxonomic scope" value="Eukaryota"/>
</dbReference>
<dbReference type="InParanoid" id="P15426"/>
<dbReference type="UniPathway" id="UPA00109">
    <property type="reaction ID" value="UER00189"/>
</dbReference>
<dbReference type="UniPathway" id="UPA00138"/>
<dbReference type="Proteomes" id="UP000006718">
    <property type="component" value="Unassembled WGS sequence"/>
</dbReference>
<dbReference type="GO" id="GO:0005829">
    <property type="term" value="C:cytosol"/>
    <property type="evidence" value="ECO:0000318"/>
    <property type="project" value="GO_Central"/>
</dbReference>
<dbReference type="GO" id="GO:0008929">
    <property type="term" value="F:methylglyoxal synthase activity"/>
    <property type="evidence" value="ECO:0000250"/>
    <property type="project" value="UniProtKB"/>
</dbReference>
<dbReference type="GO" id="GO:0042803">
    <property type="term" value="F:protein homodimerization activity"/>
    <property type="evidence" value="ECO:0000250"/>
    <property type="project" value="UniProtKB"/>
</dbReference>
<dbReference type="GO" id="GO:0004807">
    <property type="term" value="F:triose-phosphate isomerase activity"/>
    <property type="evidence" value="ECO:0000250"/>
    <property type="project" value="UniProtKB"/>
</dbReference>
<dbReference type="GO" id="GO:0006094">
    <property type="term" value="P:gluconeogenesis"/>
    <property type="evidence" value="ECO:0000318"/>
    <property type="project" value="GO_Central"/>
</dbReference>
<dbReference type="GO" id="GO:0046166">
    <property type="term" value="P:glyceraldehyde-3-phosphate biosynthetic process"/>
    <property type="evidence" value="ECO:0000250"/>
    <property type="project" value="UniProtKB"/>
</dbReference>
<dbReference type="GO" id="GO:0019563">
    <property type="term" value="P:glycerol catabolic process"/>
    <property type="evidence" value="ECO:0000318"/>
    <property type="project" value="GO_Central"/>
</dbReference>
<dbReference type="GO" id="GO:0006096">
    <property type="term" value="P:glycolytic process"/>
    <property type="evidence" value="ECO:0000318"/>
    <property type="project" value="GO_Central"/>
</dbReference>
<dbReference type="GO" id="GO:0019242">
    <property type="term" value="P:methylglyoxal biosynthetic process"/>
    <property type="evidence" value="ECO:0000250"/>
    <property type="project" value="UniProtKB"/>
</dbReference>
<dbReference type="CDD" id="cd00311">
    <property type="entry name" value="TIM"/>
    <property type="match status" value="1"/>
</dbReference>
<dbReference type="FunFam" id="3.20.20.70:FF:000025">
    <property type="entry name" value="Triosephosphate isomerase"/>
    <property type="match status" value="1"/>
</dbReference>
<dbReference type="Gene3D" id="3.20.20.70">
    <property type="entry name" value="Aldolase class I"/>
    <property type="match status" value="1"/>
</dbReference>
<dbReference type="HAMAP" id="MF_00147_B">
    <property type="entry name" value="TIM_B"/>
    <property type="match status" value="1"/>
</dbReference>
<dbReference type="InterPro" id="IPR013785">
    <property type="entry name" value="Aldolase_TIM"/>
</dbReference>
<dbReference type="InterPro" id="IPR035990">
    <property type="entry name" value="TIM_sf"/>
</dbReference>
<dbReference type="InterPro" id="IPR022896">
    <property type="entry name" value="TrioseP_Isoase_bac/euk"/>
</dbReference>
<dbReference type="InterPro" id="IPR000652">
    <property type="entry name" value="Triosephosphate_isomerase"/>
</dbReference>
<dbReference type="InterPro" id="IPR020861">
    <property type="entry name" value="Triosephosphate_isomerase_AS"/>
</dbReference>
<dbReference type="NCBIfam" id="TIGR00419">
    <property type="entry name" value="tim"/>
    <property type="match status" value="1"/>
</dbReference>
<dbReference type="PANTHER" id="PTHR21139">
    <property type="entry name" value="TRIOSEPHOSPHATE ISOMERASE"/>
    <property type="match status" value="1"/>
</dbReference>
<dbReference type="PANTHER" id="PTHR21139:SF2">
    <property type="entry name" value="TRIOSEPHOSPHATE ISOMERASE"/>
    <property type="match status" value="1"/>
</dbReference>
<dbReference type="Pfam" id="PF00121">
    <property type="entry name" value="TIM"/>
    <property type="match status" value="1"/>
</dbReference>
<dbReference type="SUPFAM" id="SSF51351">
    <property type="entry name" value="Triosephosphate isomerase (TIM)"/>
    <property type="match status" value="1"/>
</dbReference>
<dbReference type="PROSITE" id="PS00171">
    <property type="entry name" value="TIM_1"/>
    <property type="match status" value="1"/>
</dbReference>
<dbReference type="PROSITE" id="PS51440">
    <property type="entry name" value="TIM_2"/>
    <property type="match status" value="1"/>
</dbReference>
<proteinExistence type="inferred from homology"/>
<accession>P15426</accession>
<evidence type="ECO:0000250" key="1">
    <source>
        <dbReference type="UniProtKB" id="P00939"/>
    </source>
</evidence>
<evidence type="ECO:0000250" key="2">
    <source>
        <dbReference type="UniProtKB" id="P17751"/>
    </source>
</evidence>
<evidence type="ECO:0000250" key="3">
    <source>
        <dbReference type="UniProtKB" id="P48500"/>
    </source>
</evidence>
<evidence type="ECO:0000250" key="4">
    <source>
        <dbReference type="UniProtKB" id="P60174"/>
    </source>
</evidence>
<evidence type="ECO:0000255" key="5">
    <source>
        <dbReference type="PROSITE-ProRule" id="PRU10127"/>
    </source>
</evidence>
<evidence type="ECO:0000305" key="6"/>
<protein>
    <recommendedName>
        <fullName>Triosephosphate isomerase</fullName>
        <shortName>TIM</shortName>
        <ecNumber evidence="5">5.3.1.1</ecNumber>
    </recommendedName>
    <alternativeName>
        <fullName evidence="1">Methylglyoxal synthase</fullName>
        <ecNumber evidence="1">4.2.3.3</ecNumber>
    </alternativeName>
    <alternativeName>
        <fullName>Triose-phosphate isomerase</fullName>
    </alternativeName>
</protein>